<accession>Q07998</accession>
<accession>B3DG73</accession>
<name>TBXTA_DANRE</name>
<feature type="chain" id="PRO_0000184418" description="T-box transcription factor T-A">
    <location>
        <begin position="1"/>
        <end position="423"/>
    </location>
</feature>
<feature type="DNA-binding region" description="T-box" evidence="2">
    <location>
        <begin position="44"/>
        <end position="212"/>
    </location>
</feature>
<feature type="region of interest" description="Disordered" evidence="3">
    <location>
        <begin position="215"/>
        <end position="234"/>
    </location>
</feature>
<feature type="region of interest" description="Disordered" evidence="3">
    <location>
        <begin position="280"/>
        <end position="304"/>
    </location>
</feature>
<feature type="compositionally biased region" description="Basic and acidic residues" evidence="3">
    <location>
        <begin position="215"/>
        <end position="227"/>
    </location>
</feature>
<feature type="compositionally biased region" description="Polar residues" evidence="3">
    <location>
        <begin position="290"/>
        <end position="304"/>
    </location>
</feature>
<gene>
    <name type="primary">tbxta</name>
    <name type="synonym">ntl</name>
    <name type="synonym">ntla</name>
    <name type="synonym">t</name>
</gene>
<reference key="1">
    <citation type="journal article" date="1992" name="Development">
        <title>The protein product of the zebrafish homologue of the mouse T gene is expressed in nuclei of the germ ring and the notochord of the early embryo.</title>
        <authorList>
            <person name="Schulte-Merker S."/>
            <person name="Ho R.K."/>
            <person name="Herrmann B.G."/>
            <person name="Nuesslein-Volhard C."/>
        </authorList>
    </citation>
    <scope>NUCLEOTIDE SEQUENCE [MRNA]</scope>
    <scope>SUBCELLULAR LOCATION</scope>
    <scope>TISSUE SPECIFICITY</scope>
    <scope>DEVELOPMENTAL STAGE</scope>
    <scope>INDUCTION</scope>
    <source>
        <tissue>Embryo</tissue>
    </source>
</reference>
<reference key="2">
    <citation type="journal article" date="2005" name="Mar. Biotechnol.">
        <title>Generation of aberrant transcripts of and free DNA ends in zebrafish no tail gene.</title>
        <authorList>
            <person name="Yamakoshi K."/>
            <person name="Shishido Y."/>
            <person name="Shimoda N."/>
        </authorList>
    </citation>
    <scope>NUCLEOTIDE SEQUENCE [GENOMIC DNA]</scope>
    <source>
        <strain>AB</strain>
    </source>
</reference>
<reference key="3">
    <citation type="submission" date="2008-04" db="EMBL/GenBank/DDBJ databases">
        <authorList>
            <consortium name="NIH - Zebrafish Gene Collection (ZGC) project"/>
        </authorList>
    </citation>
    <scope>NUCLEOTIDE SEQUENCE [LARGE SCALE MRNA]</scope>
</reference>
<reference key="4">
    <citation type="journal article" date="1993" name="Cell">
        <title>Induction of muscle pioneers and floor plate is distinguished by the zebrafish no tail mutation.</title>
        <authorList>
            <person name="Halpern M.E."/>
            <person name="Ho R.K."/>
            <person name="Walker C."/>
            <person name="Kimmel C.B."/>
        </authorList>
    </citation>
    <scope>DISRUPTION PHENOTYPE</scope>
</reference>
<reference key="5">
    <citation type="journal article" date="1994" name="Development">
        <title>Expression of zebrafish goosecoid and no tail gene products in wild-type and mutant no tail embryos.</title>
        <authorList>
            <person name="Schulte-Merker S."/>
            <person name="Hammerschmidt M."/>
            <person name="Beuchle D."/>
            <person name="Cho K.W."/>
            <person name="De Robertis E.M."/>
            <person name="Nuesslein-Volhard C."/>
        </authorList>
    </citation>
    <scope>TISSUE SPECIFICITY</scope>
</reference>
<reference key="6">
    <citation type="journal article" date="1994" name="Development">
        <title>no tail (ntl) is the zebrafish homologue of the mouse T (Brachyury) gene.</title>
        <authorList>
            <person name="Schulte-Merker S."/>
            <person name="van Eeden F.J.M."/>
            <person name="Halpern M.E."/>
            <person name="Kimmel C.B."/>
            <person name="Nuesslein-Volhard C."/>
        </authorList>
    </citation>
    <scope>FUNCTION</scope>
    <scope>SUBCELLULAR LOCATION</scope>
</reference>
<reference key="7">
    <citation type="journal article" date="2002" name="Development">
        <title>The zebrafish T-box genes no tail and spadetail are required for development of trunk and tail mesoderm and medial floor plate.</title>
        <authorList>
            <person name="Amacher S.L."/>
            <person name="Draper B.W."/>
            <person name="Summers B.R."/>
            <person name="Kimmel C.B."/>
        </authorList>
    </citation>
    <scope>FUNCTION</scope>
    <scope>TISSUE SPECIFICITY</scope>
</reference>
<reference key="8">
    <citation type="journal article" date="2004" name="Curr. Biol.">
        <title>The T box transcription factor no tail in ciliated cells controls zebrafish left-right asymmetry.</title>
        <authorList>
            <person name="Amack J.D."/>
            <person name="Yost H.J."/>
        </authorList>
    </citation>
    <scope>FUNCTION</scope>
    <scope>DISRUPTION PHENOTYPE</scope>
</reference>
<reference key="9">
    <citation type="journal article" date="2004" name="Development">
        <title>No tail co-operates with non-canonical Wnt signaling to regulate posterior body morphogenesis in zebrafish.</title>
        <authorList>
            <person name="Marlow F."/>
            <person name="Gonzalez E.M."/>
            <person name="Yin C."/>
            <person name="Rojo C."/>
            <person name="Solnica-Krezel L."/>
        </authorList>
    </citation>
    <scope>FUNCTION</scope>
    <scope>DISRUPTION PHENOTYPE</scope>
</reference>
<reference key="10">
    <citation type="journal article" date="2007" name="Nat. Chem. Biol.">
        <title>Light-controlled gene silencing in zebrafish embryos.</title>
        <authorList>
            <person name="Shestopalov I.A."/>
            <person name="Sinha S."/>
            <person name="Chen J.K."/>
        </authorList>
    </citation>
    <scope>FUNCTION</scope>
    <scope>TISSUE SPECIFICITY</scope>
    <scope>DISRUPTION PHENOTYPE</scope>
</reference>
<reference key="11">
    <citation type="journal article" date="2008" name="Mol. Biol. Rep.">
        <title>Inhibition of no tail (ntl) gene expression in zebrafish by external guide sequence (EGS) technique.</title>
        <authorList>
            <person name="Pei D.-S."/>
            <person name="Sun Y.-H."/>
            <person name="Long Y."/>
            <person name="Zhu Z.-Y."/>
        </authorList>
    </citation>
    <scope>DISRUPTION PHENOTYPE</scope>
</reference>
<proteinExistence type="evidence at protein level"/>
<dbReference type="EMBL" id="S57147">
    <property type="protein sequence ID" value="AAB25829.1"/>
    <property type="molecule type" value="mRNA"/>
</dbReference>
<dbReference type="EMBL" id="AB088068">
    <property type="protein sequence ID" value="BAC79149.1"/>
    <property type="molecule type" value="Genomic_DNA"/>
</dbReference>
<dbReference type="EMBL" id="BC162297">
    <property type="protein sequence ID" value="AAI62297.1"/>
    <property type="molecule type" value="mRNA"/>
</dbReference>
<dbReference type="EMBL" id="BC162300">
    <property type="protein sequence ID" value="AAI62300.1"/>
    <property type="molecule type" value="mRNA"/>
</dbReference>
<dbReference type="PIR" id="A49125">
    <property type="entry name" value="A49125"/>
</dbReference>
<dbReference type="RefSeq" id="NP_571237.1">
    <property type="nucleotide sequence ID" value="NM_131162.1"/>
</dbReference>
<dbReference type="SMR" id="Q07998"/>
<dbReference type="BioGRID" id="78591">
    <property type="interactions" value="4"/>
</dbReference>
<dbReference type="FunCoup" id="Q07998">
    <property type="interactions" value="5"/>
</dbReference>
<dbReference type="STRING" id="7955.ENSDARP00000141934"/>
<dbReference type="PaxDb" id="7955-ENSDARP00000005351"/>
<dbReference type="Ensembl" id="ENSDART00000164594">
    <property type="protein sequence ID" value="ENSDARP00000141934"/>
    <property type="gene ID" value="ENSDARG00000101576"/>
</dbReference>
<dbReference type="GeneID" id="30399"/>
<dbReference type="KEGG" id="dre:30399"/>
<dbReference type="AGR" id="ZFIN:ZDB-GENE-980526-437"/>
<dbReference type="CTD" id="30399"/>
<dbReference type="ZFIN" id="ZDB-GENE-980526-437">
    <property type="gene designation" value="tbxta"/>
</dbReference>
<dbReference type="eggNOG" id="KOG3585">
    <property type="taxonomic scope" value="Eukaryota"/>
</dbReference>
<dbReference type="HOGENOM" id="CLU_038303_1_1_1"/>
<dbReference type="InParanoid" id="Q07998"/>
<dbReference type="OMA" id="TNNYMEN"/>
<dbReference type="OrthoDB" id="7442607at2759"/>
<dbReference type="PhylomeDB" id="Q07998"/>
<dbReference type="TreeFam" id="TF106341"/>
<dbReference type="PRO" id="PR:Q07998"/>
<dbReference type="Proteomes" id="UP000000437">
    <property type="component" value="Chromosome 19"/>
</dbReference>
<dbReference type="Bgee" id="ENSDARG00000101576">
    <property type="expression patterns" value="Expressed in cranial skeletal system and 39 other cell types or tissues"/>
</dbReference>
<dbReference type="GO" id="GO:0000785">
    <property type="term" value="C:chromatin"/>
    <property type="evidence" value="ECO:0000314"/>
    <property type="project" value="ZFIN"/>
</dbReference>
<dbReference type="GO" id="GO:0005634">
    <property type="term" value="C:nucleus"/>
    <property type="evidence" value="ECO:0000314"/>
    <property type="project" value="UniProtKB"/>
</dbReference>
<dbReference type="GO" id="GO:0003677">
    <property type="term" value="F:DNA binding"/>
    <property type="evidence" value="ECO:0000314"/>
    <property type="project" value="ZFIN"/>
</dbReference>
<dbReference type="GO" id="GO:0000981">
    <property type="term" value="F:DNA-binding transcription factor activity, RNA polymerase II-specific"/>
    <property type="evidence" value="ECO:0000318"/>
    <property type="project" value="GO_Central"/>
</dbReference>
<dbReference type="GO" id="GO:0000978">
    <property type="term" value="F:RNA polymerase II cis-regulatory region sequence-specific DNA binding"/>
    <property type="evidence" value="ECO:0000318"/>
    <property type="project" value="GO_Central"/>
</dbReference>
<dbReference type="GO" id="GO:0043565">
    <property type="term" value="F:sequence-specific DNA binding"/>
    <property type="evidence" value="ECO:0000314"/>
    <property type="project" value="ZFIN"/>
</dbReference>
<dbReference type="GO" id="GO:0000976">
    <property type="term" value="F:transcription cis-regulatory region binding"/>
    <property type="evidence" value="ECO:0000314"/>
    <property type="project" value="ZFIN"/>
</dbReference>
<dbReference type="GO" id="GO:0001708">
    <property type="term" value="P:cell fate specification"/>
    <property type="evidence" value="ECO:0000318"/>
    <property type="project" value="GO_Central"/>
</dbReference>
<dbReference type="GO" id="GO:0060028">
    <property type="term" value="P:convergent extension involved in axis elongation"/>
    <property type="evidence" value="ECO:0000316"/>
    <property type="project" value="ZFIN"/>
</dbReference>
<dbReference type="GO" id="GO:0072045">
    <property type="term" value="P:convergent extension involved in nephron morphogenesis"/>
    <property type="evidence" value="ECO:0000315"/>
    <property type="project" value="ZFIN"/>
</dbReference>
<dbReference type="GO" id="GO:0061371">
    <property type="term" value="P:determination of heart left/right asymmetry"/>
    <property type="evidence" value="ECO:0000315"/>
    <property type="project" value="ZFIN"/>
</dbReference>
<dbReference type="GO" id="GO:0035462">
    <property type="term" value="P:determination of left/right asymmetry in diencephalon"/>
    <property type="evidence" value="ECO:0000315"/>
    <property type="project" value="ZFIN"/>
</dbReference>
<dbReference type="GO" id="GO:0003140">
    <property type="term" value="P:determination of left/right asymmetry in lateral mesoderm"/>
    <property type="evidence" value="ECO:0000315"/>
    <property type="project" value="ZFIN"/>
</dbReference>
<dbReference type="GO" id="GO:0007368">
    <property type="term" value="P:determination of left/right symmetry"/>
    <property type="evidence" value="ECO:0000315"/>
    <property type="project" value="ZFIN"/>
</dbReference>
<dbReference type="GO" id="GO:0048565">
    <property type="term" value="P:digestive tract development"/>
    <property type="evidence" value="ECO:0000316"/>
    <property type="project" value="ZFIN"/>
</dbReference>
<dbReference type="GO" id="GO:0003143">
    <property type="term" value="P:embryonic heart tube morphogenesis"/>
    <property type="evidence" value="ECO:0000315"/>
    <property type="project" value="ZFIN"/>
</dbReference>
<dbReference type="GO" id="GO:0001947">
    <property type="term" value="P:heart looping"/>
    <property type="evidence" value="ECO:0000315"/>
    <property type="project" value="ZFIN"/>
</dbReference>
<dbReference type="GO" id="GO:0003007">
    <property type="term" value="P:heart morphogenesis"/>
    <property type="evidence" value="ECO:0000318"/>
    <property type="project" value="GO_Central"/>
</dbReference>
<dbReference type="GO" id="GO:0070121">
    <property type="term" value="P:Kupffer's vesicle development"/>
    <property type="evidence" value="ECO:0000315"/>
    <property type="project" value="ZFIN"/>
</dbReference>
<dbReference type="GO" id="GO:0001889">
    <property type="term" value="P:liver development"/>
    <property type="evidence" value="ECO:0000316"/>
    <property type="project" value="ZFIN"/>
</dbReference>
<dbReference type="GO" id="GO:0007498">
    <property type="term" value="P:mesoderm development"/>
    <property type="evidence" value="ECO:0000315"/>
    <property type="project" value="ZFIN"/>
</dbReference>
<dbReference type="GO" id="GO:0001707">
    <property type="term" value="P:mesoderm formation"/>
    <property type="evidence" value="ECO:0000316"/>
    <property type="project" value="ZFIN"/>
</dbReference>
<dbReference type="GO" id="GO:0060034">
    <property type="term" value="P:notochord cell differentiation"/>
    <property type="evidence" value="ECO:0000315"/>
    <property type="project" value="ZFIN"/>
</dbReference>
<dbReference type="GO" id="GO:0030903">
    <property type="term" value="P:notochord development"/>
    <property type="evidence" value="ECO:0000315"/>
    <property type="project" value="ZFIN"/>
</dbReference>
<dbReference type="GO" id="GO:0014028">
    <property type="term" value="P:notochord formation"/>
    <property type="evidence" value="ECO:0000315"/>
    <property type="project" value="ZFIN"/>
</dbReference>
<dbReference type="GO" id="GO:0031016">
    <property type="term" value="P:pancreas development"/>
    <property type="evidence" value="ECO:0000316"/>
    <property type="project" value="ZFIN"/>
</dbReference>
<dbReference type="GO" id="GO:0045893">
    <property type="term" value="P:positive regulation of DNA-templated transcription"/>
    <property type="evidence" value="ECO:0007669"/>
    <property type="project" value="InterPro"/>
</dbReference>
<dbReference type="GO" id="GO:0036342">
    <property type="term" value="P:post-anal tail morphogenesis"/>
    <property type="evidence" value="ECO:0000315"/>
    <property type="project" value="ZFIN"/>
</dbReference>
<dbReference type="GO" id="GO:0035775">
    <property type="term" value="P:pronephric glomerulus morphogenesis"/>
    <property type="evidence" value="ECO:0000315"/>
    <property type="project" value="ZFIN"/>
</dbReference>
<dbReference type="GO" id="GO:0030510">
    <property type="term" value="P:regulation of BMP signaling pathway"/>
    <property type="evidence" value="ECO:0000315"/>
    <property type="project" value="ZFIN"/>
</dbReference>
<dbReference type="GO" id="GO:0042663">
    <property type="term" value="P:regulation of endodermal cell fate specification"/>
    <property type="evidence" value="ECO:0000316"/>
    <property type="project" value="ZFIN"/>
</dbReference>
<dbReference type="GO" id="GO:0006357">
    <property type="term" value="P:regulation of transcription by RNA polymerase II"/>
    <property type="evidence" value="ECO:0000318"/>
    <property type="project" value="GO_Central"/>
</dbReference>
<dbReference type="GO" id="GO:0061053">
    <property type="term" value="P:somite development"/>
    <property type="evidence" value="ECO:0000315"/>
    <property type="project" value="ZFIN"/>
</dbReference>
<dbReference type="GO" id="GO:0001757">
    <property type="term" value="P:somite specification"/>
    <property type="evidence" value="ECO:0000315"/>
    <property type="project" value="ZFIN"/>
</dbReference>
<dbReference type="GO" id="GO:0001756">
    <property type="term" value="P:somitogenesis"/>
    <property type="evidence" value="ECO:0000315"/>
    <property type="project" value="ZFIN"/>
</dbReference>
<dbReference type="GO" id="GO:0010159">
    <property type="term" value="P:specification of animal organ position"/>
    <property type="evidence" value="ECO:0000315"/>
    <property type="project" value="ZFIN"/>
</dbReference>
<dbReference type="GO" id="GO:0060063">
    <property type="term" value="P:Spemann organizer formation at the embryonic shield"/>
    <property type="evidence" value="ECO:0000315"/>
    <property type="project" value="ZFIN"/>
</dbReference>
<dbReference type="GO" id="GO:0016055">
    <property type="term" value="P:Wnt signaling pathway"/>
    <property type="evidence" value="ECO:0007669"/>
    <property type="project" value="UniProtKB-KW"/>
</dbReference>
<dbReference type="CDD" id="cd20192">
    <property type="entry name" value="T-box_TBXT_TBX19-like"/>
    <property type="match status" value="1"/>
</dbReference>
<dbReference type="FunFam" id="2.60.40.820:FF:000002">
    <property type="entry name" value="T-box transcription factor Brachyury"/>
    <property type="match status" value="1"/>
</dbReference>
<dbReference type="Gene3D" id="2.60.40.820">
    <property type="entry name" value="Transcription factor, T-box"/>
    <property type="match status" value="1"/>
</dbReference>
<dbReference type="InterPro" id="IPR008967">
    <property type="entry name" value="p53-like_TF_DNA-bd_sf"/>
</dbReference>
<dbReference type="InterPro" id="IPR046360">
    <property type="entry name" value="T-box_DNA-bd"/>
</dbReference>
<dbReference type="InterPro" id="IPR036960">
    <property type="entry name" value="T-box_sf"/>
</dbReference>
<dbReference type="InterPro" id="IPR002070">
    <property type="entry name" value="TF_Brachyury"/>
</dbReference>
<dbReference type="InterPro" id="IPR001699">
    <property type="entry name" value="TF_T-box"/>
</dbReference>
<dbReference type="InterPro" id="IPR018186">
    <property type="entry name" value="TF_T-box_CS"/>
</dbReference>
<dbReference type="PANTHER" id="PTHR11267">
    <property type="entry name" value="T-BOX PROTEIN-RELATED"/>
    <property type="match status" value="1"/>
</dbReference>
<dbReference type="PANTHER" id="PTHR11267:SF169">
    <property type="entry name" value="T-BOX TRANSCRIPTION FACTOR T-A"/>
    <property type="match status" value="1"/>
</dbReference>
<dbReference type="Pfam" id="PF00907">
    <property type="entry name" value="T-box"/>
    <property type="match status" value="1"/>
</dbReference>
<dbReference type="PRINTS" id="PR00938">
    <property type="entry name" value="BRACHYURY"/>
</dbReference>
<dbReference type="PRINTS" id="PR00937">
    <property type="entry name" value="TBOX"/>
</dbReference>
<dbReference type="SMART" id="SM00425">
    <property type="entry name" value="TBOX"/>
    <property type="match status" value="1"/>
</dbReference>
<dbReference type="SUPFAM" id="SSF49417">
    <property type="entry name" value="p53-like transcription factors"/>
    <property type="match status" value="1"/>
</dbReference>
<dbReference type="PROSITE" id="PS01283">
    <property type="entry name" value="TBOX_1"/>
    <property type="match status" value="1"/>
</dbReference>
<dbReference type="PROSITE" id="PS01264">
    <property type="entry name" value="TBOX_2"/>
    <property type="match status" value="1"/>
</dbReference>
<dbReference type="PROSITE" id="PS50252">
    <property type="entry name" value="TBOX_3"/>
    <property type="match status" value="1"/>
</dbReference>
<evidence type="ECO:0000250" key="1">
    <source>
        <dbReference type="UniProtKB" id="P20293"/>
    </source>
</evidence>
<evidence type="ECO:0000255" key="2">
    <source>
        <dbReference type="PROSITE-ProRule" id="PRU00201"/>
    </source>
</evidence>
<evidence type="ECO:0000256" key="3">
    <source>
        <dbReference type="SAM" id="MobiDB-lite"/>
    </source>
</evidence>
<evidence type="ECO:0000269" key="4">
    <source>
    </source>
</evidence>
<evidence type="ECO:0000269" key="5">
    <source>
    </source>
</evidence>
<evidence type="ECO:0000269" key="6">
    <source>
    </source>
</evidence>
<evidence type="ECO:0000269" key="7">
    <source>
    </source>
</evidence>
<evidence type="ECO:0000269" key="8">
    <source>
    </source>
</evidence>
<evidence type="ECO:0000269" key="9">
    <source>
    </source>
</evidence>
<evidence type="ECO:0000269" key="10">
    <source>
    </source>
</evidence>
<evidence type="ECO:0000269" key="11">
    <source>
    </source>
</evidence>
<evidence type="ECO:0000269" key="12">
    <source>
    </source>
</evidence>
<evidence type="ECO:0000305" key="13"/>
<protein>
    <recommendedName>
        <fullName evidence="13">T-box transcription factor T-A</fullName>
    </recommendedName>
    <alternativeName>
        <fullName evidence="13">Brachyury protein homolog-A</fullName>
    </alternativeName>
    <alternativeName>
        <fullName evidence="13">No tail protein A-A</fullName>
        <shortName>No tail protein-A</shortName>
    </alternativeName>
    <alternativeName>
        <fullName evidence="13">Protein T homolog-A</fullName>
    </alternativeName>
    <alternativeName>
        <fullName evidence="13">T-box protein ZfT-A</fullName>
        <shortName>Zf-T-A</shortName>
    </alternativeName>
</protein>
<sequence>MSASSPDQRLDHLLSAVESEFQKGSEKGDASERDIKLSLEDAELWTKFKELTNEMIVTKTGRRMFPVLRASVTGLDPNAMYSVLLDFVAADNNRWKYVNGEWVPGGKPEPQSPSCVYIHPDSPNFGAHWMKAPVSFSKVKLSNKLNGGGQIMLNSLHKYEPRIHIVKVGGIQKMISSQSFPETQFIAVTAYQNEEITALKIKHNPFAKAFLDAKERSDHKEVPDHSTDNQQSGYSQLGGWFLPSNGPMGPSSSPPQFNGAPVHSSGSYCERYSSLRNHRAAPYPSHYSHRSTTTNNYMDNSSGSLASHDSWSALQIPNSSGMGTLAHTTNTTSNTSQYPSLWSVAGTTLTPSGSASGSITGGLTSQFLRGSSMSYSGLTSSLPVSSPSSMYDPGLSEVGVGDAQFESSIARLTASWAPVAQSY</sequence>
<keyword id="KW-0010">Activator</keyword>
<keyword id="KW-0217">Developmental protein</keyword>
<keyword id="KW-0238">DNA-binding</keyword>
<keyword id="KW-0539">Nucleus</keyword>
<keyword id="KW-1185">Reference proteome</keyword>
<keyword id="KW-0804">Transcription</keyword>
<keyword id="KW-0805">Transcription regulation</keyword>
<keyword id="KW-0879">Wnt signaling pathway</keyword>
<comment type="function">
    <text evidence="4 6 7 9 10">Involved in the transcriptional regulation of genes required for mesoderm differentiation, including itself. Indispensable for the formation of the notochord and the tail structure. Functions together with tbx16/spadetail in development of trunk and tail mesoderm. Functions by itself early in development to repress medial floor plate and promote notochord fate but at later times, functions together with tbx16/spadetail to promote medial floor plate formation. Acts in a parallel pathway to, but cooperates with, non-canonical wnt-signaling during tail formation. Required for the morphogenesis of Kupffer's vesicle and regulates left-right asymmetry.</text>
</comment>
<comment type="subunit">
    <text evidence="1">Monomer. Binds DNA as a monomer.</text>
</comment>
<comment type="subcellular location">
    <subcellularLocation>
        <location evidence="2 5 10">Nucleus</location>
    </subcellularLocation>
</comment>
<comment type="tissue specificity">
    <text evidence="4 5 9 11">First expressed at the dorsal side of the blastula embryo. Expressed in the germ ring, shield and chordamesoderm during gastrulation and is restricted to the notochord and tailbud during somitogenesis (at protein level).</text>
</comment>
<comment type="developmental stage">
    <text evidence="5">In the embryo, first expressed at the doming stage (4.2 hours). Highest expression is found between 5.2 and 9.5 hours (epiboly) after which levels gradually decrease, with expression becoming absent by 48 hours.</text>
</comment>
<comment type="induction">
    <text evidence="5">By mesoderm-inducing factor activin A.</text>
</comment>
<comment type="disruption phenotype">
    <text evidence="6 7 8 9 12">Loss of notochord cells and posterior structures. Disrupts left-right development.</text>
</comment>
<organism>
    <name type="scientific">Danio rerio</name>
    <name type="common">Zebrafish</name>
    <name type="synonym">Brachydanio rerio</name>
    <dbReference type="NCBI Taxonomy" id="7955"/>
    <lineage>
        <taxon>Eukaryota</taxon>
        <taxon>Metazoa</taxon>
        <taxon>Chordata</taxon>
        <taxon>Craniata</taxon>
        <taxon>Vertebrata</taxon>
        <taxon>Euteleostomi</taxon>
        <taxon>Actinopterygii</taxon>
        <taxon>Neopterygii</taxon>
        <taxon>Teleostei</taxon>
        <taxon>Ostariophysi</taxon>
        <taxon>Cypriniformes</taxon>
        <taxon>Danionidae</taxon>
        <taxon>Danioninae</taxon>
        <taxon>Danio</taxon>
    </lineage>
</organism>